<accession>Q41159</accession>
<name>LCB1_ROBPS</name>
<dbReference type="EMBL" id="U12782">
    <property type="protein sequence ID" value="AAA80181.1"/>
    <property type="molecule type" value="mRNA"/>
</dbReference>
<dbReference type="PDB" id="1FNY">
    <property type="method" value="X-ray"/>
    <property type="resolution" value="1.81 A"/>
    <property type="chains" value="A=32-268"/>
</dbReference>
<dbReference type="PDB" id="1FNZ">
    <property type="method" value="X-ray"/>
    <property type="resolution" value="2.05 A"/>
    <property type="chains" value="A=32-268"/>
</dbReference>
<dbReference type="PDBsum" id="1FNY"/>
<dbReference type="PDBsum" id="1FNZ"/>
<dbReference type="SMR" id="Q41159"/>
<dbReference type="UniLectin" id="Q41159"/>
<dbReference type="EvolutionaryTrace" id="Q41159"/>
<dbReference type="GO" id="GO:0030246">
    <property type="term" value="F:carbohydrate binding"/>
    <property type="evidence" value="ECO:0007669"/>
    <property type="project" value="UniProtKB-KW"/>
</dbReference>
<dbReference type="GO" id="GO:0046872">
    <property type="term" value="F:metal ion binding"/>
    <property type="evidence" value="ECO:0007669"/>
    <property type="project" value="UniProtKB-KW"/>
</dbReference>
<dbReference type="CDD" id="cd06899">
    <property type="entry name" value="lectin_legume_LecRK_Arcelin_ConA"/>
    <property type="match status" value="1"/>
</dbReference>
<dbReference type="Gene3D" id="2.60.120.200">
    <property type="match status" value="1"/>
</dbReference>
<dbReference type="InterPro" id="IPR013320">
    <property type="entry name" value="ConA-like_dom_sf"/>
</dbReference>
<dbReference type="InterPro" id="IPR016363">
    <property type="entry name" value="L-lectin"/>
</dbReference>
<dbReference type="InterPro" id="IPR000985">
    <property type="entry name" value="Lectin_LegA_CS"/>
</dbReference>
<dbReference type="InterPro" id="IPR019825">
    <property type="entry name" value="Lectin_legB_Mn/Ca_BS"/>
</dbReference>
<dbReference type="InterPro" id="IPR001220">
    <property type="entry name" value="Legume_lectin_dom"/>
</dbReference>
<dbReference type="InterPro" id="IPR050258">
    <property type="entry name" value="Leguminous_Lectin"/>
</dbReference>
<dbReference type="PANTHER" id="PTHR32401">
    <property type="entry name" value="CONCANAVALIN A-LIKE LECTIN FAMILY PROTEIN"/>
    <property type="match status" value="1"/>
</dbReference>
<dbReference type="PANTHER" id="PTHR32401:SF45">
    <property type="entry name" value="LECTIN"/>
    <property type="match status" value="1"/>
</dbReference>
<dbReference type="Pfam" id="PF00139">
    <property type="entry name" value="Lectin_legB"/>
    <property type="match status" value="1"/>
</dbReference>
<dbReference type="PIRSF" id="PIRSF002690">
    <property type="entry name" value="L-type_lectin_plant"/>
    <property type="match status" value="1"/>
</dbReference>
<dbReference type="SUPFAM" id="SSF49899">
    <property type="entry name" value="Concanavalin A-like lectins/glucanases"/>
    <property type="match status" value="1"/>
</dbReference>
<dbReference type="PROSITE" id="PS00308">
    <property type="entry name" value="LECTIN_LEGUME_ALPHA"/>
    <property type="match status" value="1"/>
</dbReference>
<dbReference type="PROSITE" id="PS00307">
    <property type="entry name" value="LECTIN_LEGUME_BETA"/>
    <property type="match status" value="1"/>
</dbReference>
<sequence>MTSYNFKTQTSFPLLLSISFFFLLLLNKVNSTGSLSFSFPKFAPNQPYLIFQRDALVTSTGVLQLTNVVNGVPSGKSLGRALYAAPFQIWDSTTGNVASFVTSFSFIIQAPNPTTTADGLAFFLAPVDTQPLDVGGMLGIFKDGYFNKSNQIVAVEFDTFSNIHFDPKGRHMGINVNSIVSIKTVPWNWTNGEVANVFISYEASTKSLTASLVYPSLETSFIVHAIVDVKDVLPEWVRFGFSATTGIDKGYVQTNDVLSWSFESNLPGGNSVASVKNAGLSTYAA</sequence>
<keyword id="KW-0002">3D-structure</keyword>
<keyword id="KW-0106">Calcium</keyword>
<keyword id="KW-0903">Direct protein sequencing</keyword>
<keyword id="KW-0325">Glycoprotein</keyword>
<keyword id="KW-0430">Lectin</keyword>
<keyword id="KW-0464">Manganese</keyword>
<keyword id="KW-0479">Metal-binding</keyword>
<keyword id="KW-0732">Signal</keyword>
<protein>
    <recommendedName>
        <fullName>Bark agglutinin I polypeptide A</fullName>
    </recommendedName>
    <alternativeName>
        <fullName>LECRPA1</fullName>
    </alternativeName>
    <alternativeName>
        <fullName>RPbAI</fullName>
    </alternativeName>
</protein>
<reference key="1">
    <citation type="journal article" date="1995" name="Plant Physiol.">
        <title>The bark of Robinia pseudoacacia contains a complex mixture of lectins. Characterization of the proteins and the cDNA clones.</title>
        <authorList>
            <person name="van Damme E.J.M."/>
            <person name="Barre A."/>
            <person name="Smeets K."/>
            <person name="Torrekens S."/>
            <person name="van Leuven F."/>
            <person name="Rouge P."/>
            <person name="Peumans W.J."/>
        </authorList>
    </citation>
    <scope>NUCLEOTIDE SEQUENCE [MRNA]</scope>
    <scope>PROTEIN SEQUENCE OF 32-50</scope>
    <source>
        <tissue>Bark</tissue>
    </source>
</reference>
<proteinExistence type="evidence at protein level"/>
<evidence type="ECO:0000250" key="1"/>
<evidence type="ECO:0000255" key="2"/>
<evidence type="ECO:0000269" key="3">
    <source>
    </source>
</evidence>
<evidence type="ECO:0000305" key="4"/>
<evidence type="ECO:0007829" key="5">
    <source>
        <dbReference type="PDB" id="1FNY"/>
    </source>
</evidence>
<comment type="function">
    <text>N-acetyl-D-galactosamine specific lectin. Bark lectins are storage protein that probably maintains stocks of nitrogen during dormant period. Self-aggregatable molecules that can bind their own carbohydrate side chains. They could also play a role in the plant's defense against phytophagous invertebrates or herbivorous higher animals.</text>
</comment>
<comment type="subunit">
    <text>RPbAI is composed of two polypeptides, A and B, that associate into five different tetrameric isolectins. The A4 combination is the only one devoid of agglutination activity. Isoform B4 displays maximal agglutination activity.</text>
</comment>
<comment type="tissue specificity">
    <text>Strong expression in seed. Lower levels in the flower, and the bark of the roots. No expression in leaf. The lectin accumulates in the inner bark in autumn.</text>
</comment>
<comment type="similarity">
    <text evidence="4">Belongs to the leguminous lectin family.</text>
</comment>
<organism>
    <name type="scientific">Robinia pseudoacacia</name>
    <name type="common">Black locust</name>
    <dbReference type="NCBI Taxonomy" id="35938"/>
    <lineage>
        <taxon>Eukaryota</taxon>
        <taxon>Viridiplantae</taxon>
        <taxon>Streptophyta</taxon>
        <taxon>Embryophyta</taxon>
        <taxon>Tracheophyta</taxon>
        <taxon>Spermatophyta</taxon>
        <taxon>Magnoliopsida</taxon>
        <taxon>eudicotyledons</taxon>
        <taxon>Gunneridae</taxon>
        <taxon>Pentapetalae</taxon>
        <taxon>rosids</taxon>
        <taxon>fabids</taxon>
        <taxon>Fabales</taxon>
        <taxon>Fabaceae</taxon>
        <taxon>Papilionoideae</taxon>
        <taxon>50 kb inversion clade</taxon>
        <taxon>NPAAA clade</taxon>
        <taxon>Hologalegina</taxon>
        <taxon>robinioid clade</taxon>
        <taxon>Robinieae</taxon>
        <taxon>Robinia</taxon>
    </lineage>
</organism>
<feature type="signal peptide" evidence="3">
    <location>
        <begin position="1"/>
        <end position="31"/>
    </location>
</feature>
<feature type="chain" id="PRO_0000017644" description="Bark agglutinin I polypeptide A">
    <location>
        <begin position="32"/>
        <end position="285"/>
    </location>
</feature>
<feature type="binding site" evidence="1">
    <location>
        <position position="156"/>
    </location>
    <ligand>
        <name>Mn(2+)</name>
        <dbReference type="ChEBI" id="CHEBI:29035"/>
    </ligand>
</feature>
<feature type="binding site" evidence="1">
    <location>
        <position position="158"/>
    </location>
    <ligand>
        <name>Ca(2+)</name>
        <dbReference type="ChEBI" id="CHEBI:29108"/>
    </ligand>
</feature>
<feature type="binding site" evidence="1">
    <location>
        <position position="158"/>
    </location>
    <ligand>
        <name>Mn(2+)</name>
        <dbReference type="ChEBI" id="CHEBI:29035"/>
    </ligand>
</feature>
<feature type="binding site" evidence="1">
    <location>
        <position position="160"/>
    </location>
    <ligand>
        <name>Ca(2+)</name>
        <dbReference type="ChEBI" id="CHEBI:29108"/>
    </ligand>
</feature>
<feature type="binding site" evidence="1">
    <location>
        <position position="162"/>
    </location>
    <ligand>
        <name>Ca(2+)</name>
        <dbReference type="ChEBI" id="CHEBI:29108"/>
    </ligand>
</feature>
<feature type="binding site" evidence="1">
    <location>
        <position position="166"/>
    </location>
    <ligand>
        <name>Ca(2+)</name>
        <dbReference type="ChEBI" id="CHEBI:29108"/>
    </ligand>
</feature>
<feature type="binding site" evidence="1">
    <location>
        <position position="166"/>
    </location>
    <ligand>
        <name>Mn(2+)</name>
        <dbReference type="ChEBI" id="CHEBI:29035"/>
    </ligand>
</feature>
<feature type="binding site" evidence="1">
    <location>
        <position position="171"/>
    </location>
    <ligand>
        <name>Mn(2+)</name>
        <dbReference type="ChEBI" id="CHEBI:29035"/>
    </ligand>
</feature>
<feature type="glycosylation site" description="N-linked (GlcNAc...) asparagine" evidence="2">
    <location>
        <position position="147"/>
    </location>
</feature>
<feature type="glycosylation site" description="N-linked (GlcNAc...) asparagine" evidence="2">
    <location>
        <position position="188"/>
    </location>
</feature>
<feature type="strand" evidence="5">
    <location>
        <begin position="33"/>
        <end position="41"/>
    </location>
</feature>
<feature type="strand" evidence="5">
    <location>
        <begin position="49"/>
        <end position="53"/>
    </location>
</feature>
<feature type="strand" evidence="5">
    <location>
        <begin position="78"/>
        <end position="85"/>
    </location>
</feature>
<feature type="turn" evidence="5">
    <location>
        <begin position="92"/>
        <end position="94"/>
    </location>
</feature>
<feature type="strand" evidence="5">
    <location>
        <begin position="99"/>
        <end position="107"/>
    </location>
</feature>
<feature type="strand" evidence="5">
    <location>
        <begin position="118"/>
        <end position="126"/>
    </location>
</feature>
<feature type="helix" evidence="5">
    <location>
        <begin position="135"/>
        <end position="137"/>
    </location>
</feature>
<feature type="turn" evidence="5">
    <location>
        <begin position="138"/>
        <end position="140"/>
    </location>
</feature>
<feature type="strand" evidence="5">
    <location>
        <begin position="153"/>
        <end position="158"/>
    </location>
</feature>
<feature type="turn" evidence="5">
    <location>
        <begin position="163"/>
        <end position="165"/>
    </location>
</feature>
<feature type="strand" evidence="5">
    <location>
        <begin position="168"/>
        <end position="180"/>
    </location>
</feature>
<feature type="strand" evidence="5">
    <location>
        <begin position="182"/>
        <end position="186"/>
    </location>
</feature>
<feature type="strand" evidence="5">
    <location>
        <begin position="195"/>
        <end position="202"/>
    </location>
</feature>
<feature type="helix" evidence="5">
    <location>
        <begin position="203"/>
        <end position="205"/>
    </location>
</feature>
<feature type="strand" evidence="5">
    <location>
        <begin position="207"/>
        <end position="214"/>
    </location>
</feature>
<feature type="turn" evidence="5">
    <location>
        <begin position="215"/>
        <end position="218"/>
    </location>
</feature>
<feature type="strand" evidence="5">
    <location>
        <begin position="219"/>
        <end position="226"/>
    </location>
</feature>
<feature type="helix" evidence="5">
    <location>
        <begin position="229"/>
        <end position="232"/>
    </location>
</feature>
<feature type="strand" evidence="5">
    <location>
        <begin position="235"/>
        <end position="245"/>
    </location>
</feature>
<feature type="strand" evidence="5">
    <location>
        <begin position="256"/>
        <end position="266"/>
    </location>
</feature>